<keyword id="KW-0046">Antibiotic resistance</keyword>
<keyword id="KW-0238">DNA-binding</keyword>
<keyword id="KW-1185">Reference proteome</keyword>
<keyword id="KW-0678">Repressor</keyword>
<keyword id="KW-0804">Transcription</keyword>
<keyword id="KW-0805">Transcription regulation</keyword>
<dbReference type="EMBL" id="CU458896">
    <property type="protein sequence ID" value="CAM61583.1"/>
    <property type="molecule type" value="Genomic_DNA"/>
</dbReference>
<dbReference type="RefSeq" id="WP_005084713.1">
    <property type="nucleotide sequence ID" value="NZ_MLCG01000002.1"/>
</dbReference>
<dbReference type="SMR" id="B1MM06"/>
<dbReference type="GeneID" id="93378446"/>
<dbReference type="KEGG" id="mab:MAB_1497c"/>
<dbReference type="Proteomes" id="UP000007137">
    <property type="component" value="Chromosome"/>
</dbReference>
<dbReference type="GO" id="GO:0003700">
    <property type="term" value="F:DNA-binding transcription factor activity"/>
    <property type="evidence" value="ECO:0007669"/>
    <property type="project" value="TreeGrafter"/>
</dbReference>
<dbReference type="GO" id="GO:0000976">
    <property type="term" value="F:transcription cis-regulatory region binding"/>
    <property type="evidence" value="ECO:0007669"/>
    <property type="project" value="TreeGrafter"/>
</dbReference>
<dbReference type="GO" id="GO:0046677">
    <property type="term" value="P:response to antibiotic"/>
    <property type="evidence" value="ECO:0007669"/>
    <property type="project" value="UniProtKB-KW"/>
</dbReference>
<dbReference type="Gene3D" id="1.10.10.60">
    <property type="entry name" value="Homeodomain-like"/>
    <property type="match status" value="1"/>
</dbReference>
<dbReference type="Gene3D" id="1.10.357.10">
    <property type="entry name" value="Tetracycline Repressor, domain 2"/>
    <property type="match status" value="1"/>
</dbReference>
<dbReference type="InterPro" id="IPR023772">
    <property type="entry name" value="DNA-bd_HTH_TetR-type_CS"/>
</dbReference>
<dbReference type="InterPro" id="IPR009057">
    <property type="entry name" value="Homeodomain-like_sf"/>
</dbReference>
<dbReference type="InterPro" id="IPR050109">
    <property type="entry name" value="HTH-type_TetR-like_transc_reg"/>
</dbReference>
<dbReference type="InterPro" id="IPR001647">
    <property type="entry name" value="HTH_TetR"/>
</dbReference>
<dbReference type="InterPro" id="IPR036271">
    <property type="entry name" value="Tet_transcr_reg_TetR-rel_C_sf"/>
</dbReference>
<dbReference type="InterPro" id="IPR011075">
    <property type="entry name" value="TetR_C"/>
</dbReference>
<dbReference type="PANTHER" id="PTHR30055">
    <property type="entry name" value="HTH-TYPE TRANSCRIPTIONAL REGULATOR RUTR"/>
    <property type="match status" value="1"/>
</dbReference>
<dbReference type="PANTHER" id="PTHR30055:SF148">
    <property type="entry name" value="TETR-FAMILY TRANSCRIPTIONAL REGULATOR"/>
    <property type="match status" value="1"/>
</dbReference>
<dbReference type="Pfam" id="PF16859">
    <property type="entry name" value="TetR_C_11"/>
    <property type="match status" value="1"/>
</dbReference>
<dbReference type="Pfam" id="PF00440">
    <property type="entry name" value="TetR_N"/>
    <property type="match status" value="1"/>
</dbReference>
<dbReference type="SUPFAM" id="SSF46689">
    <property type="entry name" value="Homeodomain-like"/>
    <property type="match status" value="1"/>
</dbReference>
<dbReference type="SUPFAM" id="SSF48498">
    <property type="entry name" value="Tetracyclin repressor-like, C-terminal domain"/>
    <property type="match status" value="1"/>
</dbReference>
<dbReference type="PROSITE" id="PS01081">
    <property type="entry name" value="HTH_TETR_1"/>
    <property type="match status" value="1"/>
</dbReference>
<dbReference type="PROSITE" id="PS50977">
    <property type="entry name" value="HTH_TETR_2"/>
    <property type="match status" value="1"/>
</dbReference>
<gene>
    <name evidence="3" type="primary">tetR</name>
    <name type="ordered locus">MAB_1497c</name>
</gene>
<accession>B1MM06</accession>
<evidence type="ECO:0000255" key="1">
    <source>
        <dbReference type="PROSITE-ProRule" id="PRU00335"/>
    </source>
</evidence>
<evidence type="ECO:0000269" key="2">
    <source>
    </source>
</evidence>
<evidence type="ECO:0000303" key="3">
    <source>
    </source>
</evidence>
<evidence type="ECO:0000305" key="4"/>
<sequence>MVARGETRSAALLAVALQVLIRDGYDRFSMDSVAALAHASKTTIYRRWSNKAELIKAALDAHDASFNDEVFDTGGLRTDLIATMGMLRRKAQALPPTLYPDLIRAMEHDETLSDAIRRHLADPGLSPFDAPLSRAVGRGEAGVDVDRQLIHDVAEAMLTHRLTLGGPLDDAFIGRLVDDVLLVLIRPGAR</sequence>
<name>TETR_MYCA9</name>
<proteinExistence type="evidence at protein level"/>
<comment type="function">
    <text evidence="2">Binds to its own palindromic promoter and represses transcription of its operon; addition of tetracycline or doxycycline (but not tigecycline) interferes with DNA binding. Addition of TetX to the DNA-TetR-antibiotic complex restores DNA binding.</text>
</comment>
<comment type="subunit">
    <text evidence="4">Homodimer.</text>
</comment>
<comment type="induction">
    <text evidence="2">Expression strongly increases after 30 minutes and then decreases over 3 hours in the presence of tetracycline; not under control of whiB7. Probably part of the TetR-TetX operon.</text>
</comment>
<feature type="chain" id="PRO_0000448377" description="DNA-binding transcriptional repressor TetR">
    <location>
        <begin position="1"/>
        <end position="190"/>
    </location>
</feature>
<feature type="domain" description="HTH tetR-type" evidence="1">
    <location>
        <begin position="6"/>
        <end position="66"/>
    </location>
</feature>
<feature type="DNA-binding region" description="H-T-H motif" evidence="1">
    <location>
        <begin position="29"/>
        <end position="48"/>
    </location>
</feature>
<protein>
    <recommendedName>
        <fullName evidence="3">DNA-binding transcriptional repressor TetR</fullName>
    </recommendedName>
    <alternativeName>
        <fullName evidence="3">MabTetRx</fullName>
    </alternativeName>
</protein>
<organism>
    <name type="scientific">Mycobacteroides abscessus (strain ATCC 19977 / DSM 44196 / CCUG 20993 / CIP 104536 / JCM 13569 / NCTC 13031 / TMC 1543 / L948)</name>
    <name type="common">Mycobacterium abscessus</name>
    <dbReference type="NCBI Taxonomy" id="561007"/>
    <lineage>
        <taxon>Bacteria</taxon>
        <taxon>Bacillati</taxon>
        <taxon>Actinomycetota</taxon>
        <taxon>Actinomycetes</taxon>
        <taxon>Mycobacteriales</taxon>
        <taxon>Mycobacteriaceae</taxon>
        <taxon>Mycobacteroides</taxon>
        <taxon>Mycobacteroides abscessus</taxon>
    </lineage>
</organism>
<reference key="1">
    <citation type="journal article" date="2009" name="PLoS ONE">
        <title>Non mycobacterial virulence genes in the genome of the emerging pathogen Mycobacterium abscessus.</title>
        <authorList>
            <person name="Ripoll F."/>
            <person name="Pasek S."/>
            <person name="Schenowitz C."/>
            <person name="Dossat C."/>
            <person name="Barbe V."/>
            <person name="Rottman M."/>
            <person name="Macheras E."/>
            <person name="Heym B."/>
            <person name="Herrmann J.L."/>
            <person name="Daffe M."/>
            <person name="Brosch R."/>
            <person name="Risler J.L."/>
            <person name="Gaillard J.L."/>
        </authorList>
    </citation>
    <scope>NUCLEOTIDE SEQUENCE [LARGE SCALE GENOMIC DNA]</scope>
    <source>
        <strain>ATCC 19977 / DSM 44196 / CCUG 20993 / CIP 104536 / JCM 13569 / NCTC 13031 / TMC 1543 / L948</strain>
    </source>
</reference>
<reference key="2">
    <citation type="journal article" date="2018" name="Antimicrob. Agents Chemother.">
        <title>High Levels of Intrinsic Tetracycline Resistance in Mycobacterium abscessus Are Conferred by a Tetracycline-Modifying Monooxygenase.</title>
        <authorList>
            <person name="Rudra P."/>
            <person name="Hurst-Hess K."/>
            <person name="Lappierre P."/>
            <person name="Ghosh P."/>
        </authorList>
    </citation>
    <scope>FUNCTION</scope>
    <scope>INDUCTION BY TETRACYCLINE</scope>
    <scope>OPERON</scope>
    <scope>DNA-BINDING</scope>
</reference>